<organism>
    <name type="scientific">Helicobacter pylori (strain ATCC 700392 / 26695)</name>
    <name type="common">Campylobacter pylori</name>
    <dbReference type="NCBI Taxonomy" id="85962"/>
    <lineage>
        <taxon>Bacteria</taxon>
        <taxon>Pseudomonadati</taxon>
        <taxon>Campylobacterota</taxon>
        <taxon>Epsilonproteobacteria</taxon>
        <taxon>Campylobacterales</taxon>
        <taxon>Helicobacteraceae</taxon>
        <taxon>Helicobacter</taxon>
    </lineage>
</organism>
<feature type="initiator methionine" description="Removed" evidence="3">
    <location>
        <position position="1"/>
    </location>
</feature>
<feature type="chain" id="PRO_0000177019" description="Flagellar hook-associated protein 2">
    <location>
        <begin position="2"/>
        <end position="685"/>
    </location>
</feature>
<feature type="coiled-coil region" evidence="2">
    <location>
        <begin position="618"/>
        <end position="647"/>
    </location>
</feature>
<feature type="sequence variant" description="In strain: KCTC 0217BP.">
    <original>A</original>
    <variation>S</variation>
    <location>
        <position position="59"/>
    </location>
</feature>
<feature type="sequence variant" description="In strain: KCTC 0217BP.">
    <original>S</original>
    <variation>N</variation>
    <location>
        <position position="86"/>
    </location>
</feature>
<feature type="sequence variant" description="In strain: KCTC 0217BP.">
    <original>V</original>
    <variation>A</variation>
    <location>
        <position position="91"/>
    </location>
</feature>
<feature type="sequence variant" description="In strain: KCTC 0217BP.">
    <original>V</original>
    <variation>I</variation>
    <location>
        <position position="193"/>
    </location>
</feature>
<feature type="sequence variant" description="In strain: KCTC 0217BP.">
    <original>N</original>
    <variation>S</variation>
    <location>
        <position position="231"/>
    </location>
</feature>
<feature type="sequence variant" description="In strain: KCTC 0217BP.">
    <original>M</original>
    <variation>I</variation>
    <location>
        <position position="258"/>
    </location>
</feature>
<feature type="sequence variant" description="In strain: KCTC 0217BP.">
    <original>N</original>
    <variation>D</variation>
    <location>
        <position position="270"/>
    </location>
</feature>
<feature type="sequence variant" description="In strain: KCTC 0217BP.">
    <original>I</original>
    <variation>V</variation>
    <location>
        <position position="363"/>
    </location>
</feature>
<feature type="sequence variant" description="In strain: KCTC 0217BP.">
    <original>A</original>
    <variation>S</variation>
    <location>
        <position position="368"/>
    </location>
</feature>
<feature type="sequence variant" description="In strain: KCTC 0217BP.">
    <original>S</original>
    <variation>N</variation>
    <location>
        <position position="373"/>
    </location>
</feature>
<feature type="sequence variant" description="In strain: KCTC 0217BP.">
    <original>N</original>
    <variation>G</variation>
    <location>
        <position position="422"/>
    </location>
</feature>
<feature type="sequence conflict" description="In Ref. 2; AAD07800." evidence="4" ref="2">
    <original>ERFAAYDSQISKANQKFNSVQMMIDQAAAKKN</original>
    <variation>DVLPLMIAKSLKPIKNSIPCK</variation>
    <location>
        <begin position="654"/>
        <end position="685"/>
    </location>
</feature>
<feature type="strand" evidence="5">
    <location>
        <begin position="82"/>
        <end position="88"/>
    </location>
</feature>
<feature type="strand" evidence="5">
    <location>
        <begin position="98"/>
        <end position="104"/>
    </location>
</feature>
<feature type="strand" evidence="5">
    <location>
        <begin position="110"/>
        <end position="118"/>
    </location>
</feature>
<feature type="strand" evidence="5">
    <location>
        <begin position="122"/>
        <end position="124"/>
    </location>
</feature>
<feature type="strand" evidence="5">
    <location>
        <begin position="126"/>
        <end position="135"/>
    </location>
</feature>
<feature type="strand" evidence="5">
    <location>
        <begin position="138"/>
        <end position="144"/>
    </location>
</feature>
<feature type="helix" evidence="5">
    <location>
        <begin position="150"/>
        <end position="160"/>
    </location>
</feature>
<feature type="turn" evidence="5">
    <location>
        <begin position="161"/>
        <end position="163"/>
    </location>
</feature>
<feature type="strand" evidence="5">
    <location>
        <begin position="164"/>
        <end position="171"/>
    </location>
</feature>
<feature type="strand" evidence="5">
    <location>
        <begin position="173"/>
        <end position="176"/>
    </location>
</feature>
<feature type="strand" evidence="5">
    <location>
        <begin position="178"/>
        <end position="186"/>
    </location>
</feature>
<feature type="helix" evidence="5">
    <location>
        <begin position="189"/>
        <end position="191"/>
    </location>
</feature>
<feature type="strand" evidence="5">
    <location>
        <begin position="194"/>
        <end position="200"/>
    </location>
</feature>
<feature type="strand" evidence="5">
    <location>
        <begin position="209"/>
        <end position="211"/>
    </location>
</feature>
<feature type="strand" evidence="5">
    <location>
        <begin position="219"/>
        <end position="226"/>
    </location>
</feature>
<feature type="strand" evidence="5">
    <location>
        <begin position="230"/>
        <end position="236"/>
    </location>
</feature>
<feature type="strand" evidence="5">
    <location>
        <begin position="239"/>
        <end position="241"/>
    </location>
</feature>
<feature type="helix" evidence="5">
    <location>
        <begin position="247"/>
        <end position="264"/>
    </location>
</feature>
<feature type="turn" evidence="5">
    <location>
        <begin position="266"/>
        <end position="268"/>
    </location>
</feature>
<feature type="helix" evidence="5">
    <location>
        <begin position="269"/>
        <end position="273"/>
    </location>
</feature>
<feature type="strand" evidence="5">
    <location>
        <begin position="276"/>
        <end position="282"/>
    </location>
</feature>
<feature type="helix" evidence="5">
    <location>
        <begin position="283"/>
        <end position="285"/>
    </location>
</feature>
<feature type="strand" evidence="5">
    <location>
        <begin position="287"/>
        <end position="292"/>
    </location>
</feature>
<feature type="strand" evidence="5">
    <location>
        <begin position="298"/>
        <end position="302"/>
    </location>
</feature>
<feature type="helix" evidence="5">
    <location>
        <begin position="305"/>
        <end position="308"/>
    </location>
</feature>
<feature type="strand" evidence="5">
    <location>
        <begin position="320"/>
        <end position="322"/>
    </location>
</feature>
<feature type="strand" evidence="5">
    <location>
        <begin position="336"/>
        <end position="338"/>
    </location>
</feature>
<feature type="helix" evidence="5">
    <location>
        <begin position="360"/>
        <end position="367"/>
    </location>
</feature>
<feature type="strand" evidence="5">
    <location>
        <begin position="372"/>
        <end position="376"/>
    </location>
</feature>
<feature type="strand" evidence="5">
    <location>
        <begin position="382"/>
        <end position="386"/>
    </location>
</feature>
<feature type="strand" evidence="5">
    <location>
        <begin position="389"/>
        <end position="397"/>
    </location>
</feature>
<feature type="helix" evidence="5">
    <location>
        <begin position="398"/>
        <end position="403"/>
    </location>
</feature>
<feature type="helix" evidence="5">
    <location>
        <begin position="404"/>
        <end position="407"/>
    </location>
</feature>
<feature type="strand" evidence="5">
    <location>
        <begin position="411"/>
        <end position="415"/>
    </location>
</feature>
<feature type="helix" evidence="5">
    <location>
        <begin position="417"/>
        <end position="424"/>
    </location>
</feature>
<feature type="strand" evidence="5">
    <location>
        <begin position="427"/>
        <end position="431"/>
    </location>
</feature>
<feature type="strand" evidence="5">
    <location>
        <begin position="436"/>
        <end position="439"/>
    </location>
</feature>
<feature type="strand" evidence="5">
    <location>
        <begin position="446"/>
        <end position="451"/>
    </location>
</feature>
<feature type="strand" evidence="5">
    <location>
        <begin position="460"/>
        <end position="463"/>
    </location>
</feature>
<feature type="strand" evidence="5">
    <location>
        <begin position="473"/>
        <end position="475"/>
    </location>
</feature>
<evidence type="ECO:0000250" key="1"/>
<evidence type="ECO:0000255" key="2"/>
<evidence type="ECO:0000269" key="3">
    <source>
    </source>
</evidence>
<evidence type="ECO:0000305" key="4"/>
<evidence type="ECO:0007829" key="5">
    <source>
        <dbReference type="PDB" id="6IWY"/>
    </source>
</evidence>
<accession>P96786</accession>
<comment type="function">
    <text>Required for the morphogenesis and for the elongation of the flagellar filament by facilitating polymerization of the flagellin monomers at the tip of growing filament. Forms a capping structure, which prevents flagellin subunits (transported through the central channel of the flagellum) from leaking out without polymerization at the distal end. Essential to colonize and establish infection in gastric mucosa as a result of its essential role in motility. Has effect on flaA gene transcription.</text>
</comment>
<comment type="subunit">
    <text evidence="1">Homopentamer.</text>
</comment>
<comment type="subcellular location">
    <subcellularLocation>
        <location>Secreted</location>
    </subcellularLocation>
    <subcellularLocation>
        <location>Bacterial flagellum</location>
    </subcellularLocation>
</comment>
<comment type="similarity">
    <text evidence="4">Belongs to the FliD family.</text>
</comment>
<proteinExistence type="evidence at protein level"/>
<keyword id="KW-0002">3D-structure</keyword>
<keyword id="KW-0975">Bacterial flagellum</keyword>
<keyword id="KW-0175">Coiled coil</keyword>
<keyword id="KW-0903">Direct protein sequencing</keyword>
<keyword id="KW-1185">Reference proteome</keyword>
<keyword id="KW-0964">Secreted</keyword>
<gene>
    <name type="primary">fliD</name>
    <name type="ordered locus">HP_0752</name>
</gene>
<dbReference type="EMBL" id="U82981">
    <property type="protein sequence ID" value="AAC35999.1"/>
    <property type="molecule type" value="Genomic_DNA"/>
</dbReference>
<dbReference type="EMBL" id="AE000511">
    <property type="protein sequence ID" value="AAD07800.1"/>
    <property type="molecule type" value="Genomic_DNA"/>
</dbReference>
<dbReference type="PIR" id="H64613">
    <property type="entry name" value="H64613"/>
</dbReference>
<dbReference type="RefSeq" id="NP_207545.1">
    <property type="nucleotide sequence ID" value="NC_000915.1"/>
</dbReference>
<dbReference type="PDB" id="6IWY">
    <property type="method" value="X-ray"/>
    <property type="resolution" value="2.60 A"/>
    <property type="chains" value="A=75-480"/>
</dbReference>
<dbReference type="PDBsum" id="6IWY"/>
<dbReference type="SMR" id="P96786"/>
<dbReference type="DIP" id="DIP-3401N"/>
<dbReference type="IntAct" id="P96786">
    <property type="interactions" value="1"/>
</dbReference>
<dbReference type="MINT" id="P96786"/>
<dbReference type="STRING" id="85962.HP_0752"/>
<dbReference type="PaxDb" id="85962-C694_03870"/>
<dbReference type="EnsemblBacteria" id="AAD07800">
    <property type="protein sequence ID" value="AAD07800"/>
    <property type="gene ID" value="HP_0752"/>
</dbReference>
<dbReference type="KEGG" id="hpy:HP_0752"/>
<dbReference type="PATRIC" id="fig|85962.8.peg.785"/>
<dbReference type="eggNOG" id="COG1345">
    <property type="taxonomic scope" value="Bacteria"/>
</dbReference>
<dbReference type="InParanoid" id="P96786"/>
<dbReference type="OrthoDB" id="1530at2"/>
<dbReference type="PhylomeDB" id="P96786"/>
<dbReference type="Proteomes" id="UP000000429">
    <property type="component" value="Chromosome"/>
</dbReference>
<dbReference type="GO" id="GO:0009288">
    <property type="term" value="C:bacterial-type flagellum"/>
    <property type="evidence" value="ECO:0000315"/>
    <property type="project" value="CACAO"/>
</dbReference>
<dbReference type="GO" id="GO:0009421">
    <property type="term" value="C:bacterial-type flagellum filament cap"/>
    <property type="evidence" value="ECO:0000318"/>
    <property type="project" value="GO_Central"/>
</dbReference>
<dbReference type="GO" id="GO:0009424">
    <property type="term" value="C:bacterial-type flagellum hook"/>
    <property type="evidence" value="ECO:0007669"/>
    <property type="project" value="InterPro"/>
</dbReference>
<dbReference type="GO" id="GO:0005576">
    <property type="term" value="C:extracellular region"/>
    <property type="evidence" value="ECO:0007669"/>
    <property type="project" value="UniProtKB-SubCell"/>
</dbReference>
<dbReference type="GO" id="GO:0071973">
    <property type="term" value="P:bacterial-type flagellum-dependent cell motility"/>
    <property type="evidence" value="ECO:0000318"/>
    <property type="project" value="GO_Central"/>
</dbReference>
<dbReference type="GO" id="GO:0071978">
    <property type="term" value="P:bacterial-type flagellum-dependent swarming motility"/>
    <property type="evidence" value="ECO:0000315"/>
    <property type="project" value="CACAO"/>
</dbReference>
<dbReference type="GO" id="GO:0007155">
    <property type="term" value="P:cell adhesion"/>
    <property type="evidence" value="ECO:0007669"/>
    <property type="project" value="InterPro"/>
</dbReference>
<dbReference type="InterPro" id="IPR010810">
    <property type="entry name" value="Flagellin_hook_IN_motif"/>
</dbReference>
<dbReference type="InterPro" id="IPR040026">
    <property type="entry name" value="FliD"/>
</dbReference>
<dbReference type="InterPro" id="IPR010809">
    <property type="entry name" value="FliD_C"/>
</dbReference>
<dbReference type="InterPro" id="IPR003481">
    <property type="entry name" value="FliD_N"/>
</dbReference>
<dbReference type="NCBIfam" id="NF006282">
    <property type="entry name" value="PRK08453.1"/>
    <property type="match status" value="1"/>
</dbReference>
<dbReference type="PANTHER" id="PTHR30288">
    <property type="entry name" value="FLAGELLAR CAP/ASSEMBLY PROTEIN FLID"/>
    <property type="match status" value="1"/>
</dbReference>
<dbReference type="PANTHER" id="PTHR30288:SF0">
    <property type="entry name" value="FLAGELLAR HOOK-ASSOCIATED PROTEIN 2"/>
    <property type="match status" value="1"/>
</dbReference>
<dbReference type="Pfam" id="PF07196">
    <property type="entry name" value="Flagellin_IN"/>
    <property type="match status" value="1"/>
</dbReference>
<dbReference type="Pfam" id="PF07195">
    <property type="entry name" value="FliD_C"/>
    <property type="match status" value="1"/>
</dbReference>
<dbReference type="Pfam" id="PF02465">
    <property type="entry name" value="FliD_N"/>
    <property type="match status" value="1"/>
</dbReference>
<protein>
    <recommendedName>
        <fullName>Flagellar hook-associated protein 2</fullName>
        <shortName>HAP2</shortName>
    </recommendedName>
    <alternativeName>
        <fullName>Filament cap protein</fullName>
    </alternativeName>
    <alternativeName>
        <fullName>Flagellar cap protein</fullName>
    </alternativeName>
</protein>
<name>FLID_HELPY</name>
<sequence length="685" mass="74131">MAIGSLSSLGLGSKVLNYDVIDKLKDADEKALIAPLDKKMEQNVEKQKALVEIKTLLSALKGPVKTLSDYSTYISRKSNVTGDALSASVGVGVPIQDIKVDVQNLAQGDINELGAKFSSRDDIFSQVDTTLKFYTQNKDYAVNIKAGMTLGDVAQSITDATNGEVMGIVMKTGGNDPYQLMVNTKNTGEDNRVYFGSHLQSTLTNKNALSLGVDGSGKSEVSLNLKGADGNMHEVPIMLELPESASIKQKNTAIQKAMEQALENDPNFKNLIANGDISIDTLHGGESLIINDRRGGNIEVKGSKAKELGFLQTTTQESDLLKSSRTIKEGKLEGVVSLNGQKLDLSALTKESNTSEENTDAIIQAINAKEGLSAFKNAEGKLVINSKTGMLTIKGEDALGKASLKDLGLNAGMVQSYEASQNTLFMSKNLQKASDSAFTYNGVSITRPTNEVNDVISGVNITLEQTTEPNKPAIISVSRDNQAIIDSLTEFVKAYNELIPKLDEDTRYDADTKIAGIFNGVGDIRAIRSSLNNVFSYSVHTDNGVESLMKYGLSLDDKGVMSLDEAKLSSALNSNPKATQDFFYGSDSKDMGGREIHQEGIFSKFNQVIANLIDGGNAKLKIYEDSLDRDAKSLTKDKENAQELLKTRYNIMAERFAAYDSQISKANQKFNSVQMMIDQAAAKKN</sequence>
<reference key="1">
    <citation type="journal article" date="1999" name="J. Bacteriol.">
        <title>Molecular cloning and characterization of the Helicobacter pylori fliD gene, an essential factor in flagellar structure and motility.</title>
        <authorList>
            <person name="Kim J.S."/>
            <person name="Chang J.H."/>
            <person name="Chung S.I."/>
            <person name="Yum J.S."/>
        </authorList>
    </citation>
    <scope>NUCLEOTIDE SEQUENCE [GENOMIC DNA]</scope>
    <scope>PROTEIN SEQUENCE OF 2-16</scope>
    <scope>CHARACTERIZATION</scope>
    <source>
        <strain>KCTC 0217BP</strain>
    </source>
</reference>
<reference key="2">
    <citation type="journal article" date="1997" name="Nature">
        <title>The complete genome sequence of the gastric pathogen Helicobacter pylori.</title>
        <authorList>
            <person name="Tomb J.-F."/>
            <person name="White O."/>
            <person name="Kerlavage A.R."/>
            <person name="Clayton R.A."/>
            <person name="Sutton G.G."/>
            <person name="Fleischmann R.D."/>
            <person name="Ketchum K.A."/>
            <person name="Klenk H.-P."/>
            <person name="Gill S.R."/>
            <person name="Dougherty B.A."/>
            <person name="Nelson K.E."/>
            <person name="Quackenbush J."/>
            <person name="Zhou L."/>
            <person name="Kirkness E.F."/>
            <person name="Peterson S.N."/>
            <person name="Loftus B.J."/>
            <person name="Richardson D.L."/>
            <person name="Dodson R.J."/>
            <person name="Khalak H.G."/>
            <person name="Glodek A."/>
            <person name="McKenney K."/>
            <person name="FitzGerald L.M."/>
            <person name="Lee N."/>
            <person name="Adams M.D."/>
            <person name="Hickey E.K."/>
            <person name="Berg D.E."/>
            <person name="Gocayne J.D."/>
            <person name="Utterback T.R."/>
            <person name="Peterson J.D."/>
            <person name="Kelley J.M."/>
            <person name="Cotton M.D."/>
            <person name="Weidman J.F."/>
            <person name="Fujii C."/>
            <person name="Bowman C."/>
            <person name="Watthey L."/>
            <person name="Wallin E."/>
            <person name="Hayes W.S."/>
            <person name="Borodovsky M."/>
            <person name="Karp P.D."/>
            <person name="Smith H.O."/>
            <person name="Fraser C.M."/>
            <person name="Venter J.C."/>
        </authorList>
    </citation>
    <scope>NUCLEOTIDE SEQUENCE [LARGE SCALE GENOMIC DNA]</scope>
    <source>
        <strain>ATCC 700392 / 26695</strain>
    </source>
</reference>